<gene>
    <name type="primary">PRRT2</name>
</gene>
<organism>
    <name type="scientific">Homo sapiens</name>
    <name type="common">Human</name>
    <dbReference type="NCBI Taxonomy" id="9606"/>
    <lineage>
        <taxon>Eukaryota</taxon>
        <taxon>Metazoa</taxon>
        <taxon>Chordata</taxon>
        <taxon>Craniata</taxon>
        <taxon>Vertebrata</taxon>
        <taxon>Euteleostomi</taxon>
        <taxon>Mammalia</taxon>
        <taxon>Eutheria</taxon>
        <taxon>Euarchontoglires</taxon>
        <taxon>Primates</taxon>
        <taxon>Haplorrhini</taxon>
        <taxon>Catarrhini</taxon>
        <taxon>Hominidae</taxon>
        <taxon>Homo</taxon>
    </lineage>
</organism>
<protein>
    <recommendedName>
        <fullName>Proline-rich transmembrane protein 2</fullName>
    </recommendedName>
    <alternativeName>
        <fullName>Dispanin subfamily B member 3</fullName>
        <shortName>DSPB3</shortName>
    </alternativeName>
</protein>
<evidence type="ECO:0000250" key="1">
    <source>
        <dbReference type="UniProtKB" id="D3ZFB6"/>
    </source>
</evidence>
<evidence type="ECO:0000250" key="2">
    <source>
        <dbReference type="UniProtKB" id="E9PUL5"/>
    </source>
</evidence>
<evidence type="ECO:0000255" key="3"/>
<evidence type="ECO:0000256" key="4">
    <source>
        <dbReference type="SAM" id="MobiDB-lite"/>
    </source>
</evidence>
<evidence type="ECO:0000269" key="5">
    <source>
    </source>
</evidence>
<evidence type="ECO:0000269" key="6">
    <source>
    </source>
</evidence>
<evidence type="ECO:0000269" key="7">
    <source>
    </source>
</evidence>
<evidence type="ECO:0000269" key="8">
    <source>
    </source>
</evidence>
<evidence type="ECO:0000269" key="9">
    <source>
    </source>
</evidence>
<evidence type="ECO:0000269" key="10">
    <source>
    </source>
</evidence>
<evidence type="ECO:0000269" key="11">
    <source>
    </source>
</evidence>
<evidence type="ECO:0000269" key="12">
    <source>
    </source>
</evidence>
<evidence type="ECO:0000269" key="13">
    <source>
    </source>
</evidence>
<evidence type="ECO:0000269" key="14">
    <source>
    </source>
</evidence>
<evidence type="ECO:0000303" key="15">
    <source>
    </source>
</evidence>
<evidence type="ECO:0000303" key="16">
    <source>
    </source>
</evidence>
<evidence type="ECO:0000305" key="17"/>
<accession>Q7Z6L0</accession>
<accession>A8K8M8</accession>
<accession>Q8N2N8</accession>
<accession>Q8NAQ7</accession>
<accession>Q8ND36</accession>
<accession>Q96FA8</accession>
<keyword id="KW-0025">Alternative splicing</keyword>
<keyword id="KW-1003">Cell membrane</keyword>
<keyword id="KW-0966">Cell projection</keyword>
<keyword id="KW-0968">Cytoplasmic vesicle</keyword>
<keyword id="KW-0225">Disease variant</keyword>
<keyword id="KW-1023">Dystonia</keyword>
<keyword id="KW-0887">Epilepsy</keyword>
<keyword id="KW-0472">Membrane</keyword>
<keyword id="KW-0488">Methylation</keyword>
<keyword id="KW-0597">Phosphoprotein</keyword>
<keyword id="KW-0628">Postsynaptic cell membrane</keyword>
<keyword id="KW-1267">Proteomics identification</keyword>
<keyword id="KW-1185">Reference proteome</keyword>
<keyword id="KW-0770">Synapse</keyword>
<keyword id="KW-0812">Transmembrane</keyword>
<keyword id="KW-1133">Transmembrane helix</keyword>
<sequence length="340" mass="34945">MAASSSEISEMKGVEESPKVPGEGPGHSEAETGPPQVLAGVPDQPEAPQPGPNTTAAPVDSGPKAGLAPETTETPAGASETAQATDLSLSPGGESKANCSPEDPCQETVSKPEVSKEATADQGSRLESAAPPEPAPEPAPQPDPRPDSQPTPKPALQPELPTQEDPTPEILSESVGEKQENGAVVPLQAGDGEEGPAPEPHSPPSKKSPPANGAPPRVLQQLVEEDRMRRAHSGHPGSPRGSLSRHPSSQLAGPGVEGGEGTQKPRDYIILAILSCFCPMWPVNIVAFAYAVMSRNSLQQGDVDGAQRLGRVAKLLSIVALVGGVLIIIASCVINLGVYK</sequence>
<dbReference type="EMBL" id="AK092265">
    <property type="protein sequence ID" value="BAC03843.1"/>
    <property type="molecule type" value="mRNA"/>
</dbReference>
<dbReference type="EMBL" id="AK074572">
    <property type="protein sequence ID" value="BAC11067.1"/>
    <property type="molecule type" value="mRNA"/>
</dbReference>
<dbReference type="EMBL" id="AK292393">
    <property type="protein sequence ID" value="BAF85082.1"/>
    <property type="molecule type" value="mRNA"/>
</dbReference>
<dbReference type="EMBL" id="AL834185">
    <property type="protein sequence ID" value="CAD38881.1"/>
    <property type="molecule type" value="mRNA"/>
</dbReference>
<dbReference type="EMBL" id="CH471238">
    <property type="protein sequence ID" value="EAW79991.1"/>
    <property type="molecule type" value="Genomic_DNA"/>
</dbReference>
<dbReference type="EMBL" id="BC011405">
    <property type="protein sequence ID" value="AAH11405.1"/>
    <property type="molecule type" value="mRNA"/>
</dbReference>
<dbReference type="EMBL" id="BC053594">
    <property type="protein sequence ID" value="AAH53594.1"/>
    <property type="molecule type" value="mRNA"/>
</dbReference>
<dbReference type="CCDS" id="CCDS10654.1">
    <molecule id="Q7Z6L0-1"/>
</dbReference>
<dbReference type="CCDS" id="CCDS58445.1">
    <molecule id="Q7Z6L0-2"/>
</dbReference>
<dbReference type="CCDS" id="CCDS58446.1">
    <molecule id="Q7Z6L0-3"/>
</dbReference>
<dbReference type="RefSeq" id="NP_001243371.1">
    <molecule id="Q7Z6L0-2"/>
    <property type="nucleotide sequence ID" value="NM_001256442.2"/>
</dbReference>
<dbReference type="RefSeq" id="NP_001243372.1">
    <molecule id="Q7Z6L0-3"/>
    <property type="nucleotide sequence ID" value="NM_001256443.2"/>
</dbReference>
<dbReference type="RefSeq" id="NP_660282.2">
    <molecule id="Q7Z6L0-1"/>
    <property type="nucleotide sequence ID" value="NM_145239.3"/>
</dbReference>
<dbReference type="RefSeq" id="XP_011544017.1">
    <molecule id="Q7Z6L0-2"/>
    <property type="nucleotide sequence ID" value="XM_011545715.4"/>
</dbReference>
<dbReference type="RefSeq" id="XP_011544018.1">
    <property type="nucleotide sequence ID" value="XM_011545716.2"/>
</dbReference>
<dbReference type="RefSeq" id="XP_016878377.1">
    <molecule id="Q7Z6L0-1"/>
    <property type="nucleotide sequence ID" value="XM_017022888.3"/>
</dbReference>
<dbReference type="RefSeq" id="XP_054235412.1">
    <molecule id="Q7Z6L0-2"/>
    <property type="nucleotide sequence ID" value="XM_054379437.1"/>
</dbReference>
<dbReference type="RefSeq" id="XP_054235414.1">
    <molecule id="Q7Z6L0-1"/>
    <property type="nucleotide sequence ID" value="XM_054379439.1"/>
</dbReference>
<dbReference type="BioGRID" id="125188">
    <property type="interactions" value="23"/>
</dbReference>
<dbReference type="FunCoup" id="Q7Z6L0">
    <property type="interactions" value="195"/>
</dbReference>
<dbReference type="IntAct" id="Q7Z6L0">
    <property type="interactions" value="20"/>
</dbReference>
<dbReference type="MINT" id="Q7Z6L0"/>
<dbReference type="STRING" id="9606.ENSP00000456226"/>
<dbReference type="TCDB" id="8.A.58.2.1">
    <property type="family name" value="the dispanin (dispanin) family"/>
</dbReference>
<dbReference type="GlyGen" id="Q7Z6L0">
    <property type="glycosylation" value="1 site"/>
</dbReference>
<dbReference type="iPTMnet" id="Q7Z6L0"/>
<dbReference type="PhosphoSitePlus" id="Q7Z6L0"/>
<dbReference type="SwissPalm" id="Q7Z6L0"/>
<dbReference type="BioMuta" id="PRRT2"/>
<dbReference type="DMDM" id="74738828"/>
<dbReference type="MassIVE" id="Q7Z6L0"/>
<dbReference type="PaxDb" id="9606-ENSP00000456226"/>
<dbReference type="PeptideAtlas" id="Q7Z6L0"/>
<dbReference type="ProteomicsDB" id="69436">
    <molecule id="Q7Z6L0-1"/>
</dbReference>
<dbReference type="ProteomicsDB" id="69437">
    <molecule id="Q7Z6L0-2"/>
</dbReference>
<dbReference type="ProteomicsDB" id="69438">
    <molecule id="Q7Z6L0-3"/>
</dbReference>
<dbReference type="Antibodypedia" id="3043">
    <property type="antibodies" value="109 antibodies from 24 providers"/>
</dbReference>
<dbReference type="DNASU" id="112476"/>
<dbReference type="Ensembl" id="ENST00000300797.7">
    <molecule id="Q7Z6L0-3"/>
    <property type="protein sequence ID" value="ENSP00000300797.6"/>
    <property type="gene ID" value="ENSG00000167371.21"/>
</dbReference>
<dbReference type="Ensembl" id="ENST00000358758.12">
    <molecule id="Q7Z6L0-1"/>
    <property type="protein sequence ID" value="ENSP00000351608.7"/>
    <property type="gene ID" value="ENSG00000167371.21"/>
</dbReference>
<dbReference type="Ensembl" id="ENST00000567659.3">
    <molecule id="Q7Z6L0-2"/>
    <property type="protein sequence ID" value="ENSP00000456226.1"/>
    <property type="gene ID" value="ENSG00000167371.21"/>
</dbReference>
<dbReference type="Ensembl" id="ENST00000572820.2">
    <molecule id="Q7Z6L0-1"/>
    <property type="protein sequence ID" value="ENSP00000458291.2"/>
    <property type="gene ID" value="ENSG00000167371.21"/>
</dbReference>
<dbReference type="Ensembl" id="ENST00000636131.1">
    <molecule id="Q7Z6L0-3"/>
    <property type="protein sequence ID" value="ENSP00000490390.1"/>
    <property type="gene ID" value="ENSG00000167371.21"/>
</dbReference>
<dbReference type="Ensembl" id="ENST00000637064.1">
    <molecule id="Q7Z6L0-1"/>
    <property type="protein sequence ID" value="ENSP00000490826.1"/>
    <property type="gene ID" value="ENSG00000167371.21"/>
</dbReference>
<dbReference type="Ensembl" id="ENST00000647876.1">
    <molecule id="Q7Z6L0-3"/>
    <property type="protein sequence ID" value="ENSP00000498021.1"/>
    <property type="gene ID" value="ENSG00000167371.21"/>
</dbReference>
<dbReference type="GeneID" id="112476"/>
<dbReference type="KEGG" id="hsa:112476"/>
<dbReference type="MANE-Select" id="ENST00000358758.12">
    <property type="protein sequence ID" value="ENSP00000351608.7"/>
    <property type="RefSeq nucleotide sequence ID" value="NM_145239.3"/>
    <property type="RefSeq protein sequence ID" value="NP_660282.2"/>
</dbReference>
<dbReference type="UCSC" id="uc002dud.4">
    <molecule id="Q7Z6L0-1"/>
    <property type="organism name" value="human"/>
</dbReference>
<dbReference type="AGR" id="HGNC:30500"/>
<dbReference type="CTD" id="112476"/>
<dbReference type="DisGeNET" id="112476"/>
<dbReference type="GeneCards" id="PRRT2"/>
<dbReference type="GeneReviews" id="PRRT2"/>
<dbReference type="HGNC" id="HGNC:30500">
    <property type="gene designation" value="PRRT2"/>
</dbReference>
<dbReference type="HPA" id="ENSG00000167371">
    <property type="expression patterns" value="Tissue enhanced (brain)"/>
</dbReference>
<dbReference type="MalaCards" id="PRRT2"/>
<dbReference type="MIM" id="128200">
    <property type="type" value="phenotype"/>
</dbReference>
<dbReference type="MIM" id="602066">
    <property type="type" value="phenotype"/>
</dbReference>
<dbReference type="MIM" id="605751">
    <property type="type" value="phenotype"/>
</dbReference>
<dbReference type="MIM" id="614386">
    <property type="type" value="gene"/>
</dbReference>
<dbReference type="neXtProt" id="NX_Q7Z6L0"/>
<dbReference type="OpenTargets" id="ENSG00000167371"/>
<dbReference type="Orphanet" id="569">
    <property type="disease" value="Familial or sporadic hemiplegic migraine"/>
</dbReference>
<dbReference type="Orphanet" id="36387">
    <property type="disease" value="Genetic epilepsy with febrile seizure plus"/>
</dbReference>
<dbReference type="Orphanet" id="31709">
    <property type="disease" value="Infantile convulsions and choreoathetosis"/>
</dbReference>
<dbReference type="Orphanet" id="98811">
    <property type="disease" value="Paroxysmal exertion-induced dyskinesia"/>
</dbReference>
<dbReference type="Orphanet" id="98809">
    <property type="disease" value="Paroxysmal kinesigenic dyskinesia"/>
</dbReference>
<dbReference type="Orphanet" id="98810">
    <property type="disease" value="Paroxysmal non-kinesigenic dyskinesia"/>
</dbReference>
<dbReference type="Orphanet" id="306">
    <property type="disease" value="Self-limited infantile epilepsy"/>
</dbReference>
<dbReference type="PharmGKB" id="PA142671132"/>
<dbReference type="VEuPathDB" id="HostDB:ENSG00000167371"/>
<dbReference type="eggNOG" id="ENOG502S2U1">
    <property type="taxonomic scope" value="Eukaryota"/>
</dbReference>
<dbReference type="GeneTree" id="ENSGT00940000161103"/>
<dbReference type="HOGENOM" id="CLU_070349_0_0_1"/>
<dbReference type="InParanoid" id="Q7Z6L0"/>
<dbReference type="OMA" id="DPQPDCQ"/>
<dbReference type="OrthoDB" id="9665078at2759"/>
<dbReference type="PAN-GO" id="Q7Z6L0">
    <property type="GO annotations" value="1 GO annotation based on evolutionary models"/>
</dbReference>
<dbReference type="PhylomeDB" id="Q7Z6L0"/>
<dbReference type="TreeFam" id="TF331357"/>
<dbReference type="PathwayCommons" id="Q7Z6L0"/>
<dbReference type="SignaLink" id="Q7Z6L0"/>
<dbReference type="BioGRID-ORCS" id="112476">
    <property type="hits" value="12 hits in 1148 CRISPR screens"/>
</dbReference>
<dbReference type="ChiTaRS" id="PRRT2">
    <property type="organism name" value="human"/>
</dbReference>
<dbReference type="GeneWiki" id="PRRT2"/>
<dbReference type="GenomeRNAi" id="112476"/>
<dbReference type="Pharos" id="Q7Z6L0">
    <property type="development level" value="Tbio"/>
</dbReference>
<dbReference type="PRO" id="PR:Q7Z6L0"/>
<dbReference type="Proteomes" id="UP000005640">
    <property type="component" value="Chromosome 16"/>
</dbReference>
<dbReference type="RNAct" id="Q7Z6L0">
    <property type="molecule type" value="protein"/>
</dbReference>
<dbReference type="Bgee" id="ENSG00000167371">
    <property type="expression patterns" value="Expressed in right hemisphere of cerebellum and 140 other cell types or tissues"/>
</dbReference>
<dbReference type="ExpressionAtlas" id="Q7Z6L0">
    <property type="expression patterns" value="baseline and differential"/>
</dbReference>
<dbReference type="GO" id="GO:0043679">
    <property type="term" value="C:axon terminus"/>
    <property type="evidence" value="ECO:0000250"/>
    <property type="project" value="UniProtKB"/>
</dbReference>
<dbReference type="GO" id="GO:0043197">
    <property type="term" value="C:dendritic spine"/>
    <property type="evidence" value="ECO:0007669"/>
    <property type="project" value="UniProtKB-SubCell"/>
</dbReference>
<dbReference type="GO" id="GO:0098978">
    <property type="term" value="C:glutamatergic synapse"/>
    <property type="evidence" value="ECO:0007669"/>
    <property type="project" value="Ensembl"/>
</dbReference>
<dbReference type="GO" id="GO:0016020">
    <property type="term" value="C:membrane"/>
    <property type="evidence" value="ECO:0000318"/>
    <property type="project" value="GO_Central"/>
</dbReference>
<dbReference type="GO" id="GO:0005886">
    <property type="term" value="C:plasma membrane"/>
    <property type="evidence" value="ECO:0000314"/>
    <property type="project" value="HPA"/>
</dbReference>
<dbReference type="GO" id="GO:0098839">
    <property type="term" value="C:postsynaptic density membrane"/>
    <property type="evidence" value="ECO:0007669"/>
    <property type="project" value="UniProtKB-SubCell"/>
</dbReference>
<dbReference type="GO" id="GO:0098793">
    <property type="term" value="C:presynapse"/>
    <property type="evidence" value="ECO:0000250"/>
    <property type="project" value="UniProtKB"/>
</dbReference>
<dbReference type="GO" id="GO:0042734">
    <property type="term" value="C:presynaptic membrane"/>
    <property type="evidence" value="ECO:0000250"/>
    <property type="project" value="UniProtKB"/>
</dbReference>
<dbReference type="GO" id="GO:0008021">
    <property type="term" value="C:synaptic vesicle"/>
    <property type="evidence" value="ECO:0000250"/>
    <property type="project" value="UniProtKB"/>
</dbReference>
<dbReference type="GO" id="GO:0030672">
    <property type="term" value="C:synaptic vesicle membrane"/>
    <property type="evidence" value="ECO:0007669"/>
    <property type="project" value="UniProtKB-SubCell"/>
</dbReference>
<dbReference type="GO" id="GO:0031982">
    <property type="term" value="C:vesicle"/>
    <property type="evidence" value="ECO:0000250"/>
    <property type="project" value="UniProtKB"/>
</dbReference>
<dbReference type="GO" id="GO:0017075">
    <property type="term" value="F:syntaxin-1 binding"/>
    <property type="evidence" value="ECO:0000250"/>
    <property type="project" value="UniProtKB"/>
</dbReference>
<dbReference type="GO" id="GO:1905513">
    <property type="term" value="P:negative regulation of short-term synaptic potentiation"/>
    <property type="evidence" value="ECO:0000250"/>
    <property type="project" value="UniProtKB"/>
</dbReference>
<dbReference type="GO" id="GO:0035544">
    <property type="term" value="P:negative regulation of SNARE complex assembly"/>
    <property type="evidence" value="ECO:0000250"/>
    <property type="project" value="UniProtKB"/>
</dbReference>
<dbReference type="GO" id="GO:0050884">
    <property type="term" value="P:neuromuscular process controlling posture"/>
    <property type="evidence" value="ECO:0000315"/>
    <property type="project" value="MGI"/>
</dbReference>
<dbReference type="GO" id="GO:0150037">
    <property type="term" value="P:regulation of calcium-dependent activation of synaptic vesicle fusion"/>
    <property type="evidence" value="ECO:0007669"/>
    <property type="project" value="Ensembl"/>
</dbReference>
<dbReference type="GO" id="GO:0031629">
    <property type="term" value="P:synaptic vesicle fusion to presynaptic active zone membrane"/>
    <property type="evidence" value="ECO:0000250"/>
    <property type="project" value="UniProtKB"/>
</dbReference>
<dbReference type="InterPro" id="IPR051423">
    <property type="entry name" value="CD225/Dispanin"/>
</dbReference>
<dbReference type="InterPro" id="IPR007593">
    <property type="entry name" value="CD225/Dispanin_fam"/>
</dbReference>
<dbReference type="PANTHER" id="PTHR14948">
    <property type="entry name" value="NG5"/>
    <property type="match status" value="1"/>
</dbReference>
<dbReference type="PANTHER" id="PTHR14948:SF20">
    <property type="entry name" value="PROLINE-RICH TRANSMEMBRANE PROTEIN 2"/>
    <property type="match status" value="1"/>
</dbReference>
<dbReference type="Pfam" id="PF04505">
    <property type="entry name" value="CD225"/>
    <property type="match status" value="1"/>
</dbReference>
<proteinExistence type="evidence at protein level"/>
<name>PRRT2_HUMAN</name>
<comment type="function">
    <text evidence="2">As a component of the outer core of AMPAR complex, may be involved in synaptic transmission in the central nervous system. In hippocampal neurons, in presynaptic terminals, plays an important role in the final steps of neurotransmitter release, possibly by regulating Ca(2+)-sensing. In the cerebellum, may inhibit SNARE complex formation and down-regulate short-term facilitation.</text>
</comment>
<comment type="subunit">
    <text evidence="2 12 13">Component of the outer core of AMPAR complex (PubMed:25915028). AMPAR complex consists of an inner core made of 4 pore-forming GluA/GRIA proteins (GRIA1, GRIA2, GRIA3 and GRIA4) and 4 major auxiliary subunits arranged in a twofold symmetry. One of the two pairs of distinct binding sites is occupied either by CNIH2, CNIH3 or CACNG2, CACNG3. The other harbors CACNG2, CACNG3, CACNG4, CACNG8 or GSG1L. This inner core of AMPAR complex is complemented by outer core constituents binding directly to the GluA/GRIA proteins at sites distinct from the interaction sites of the inner core constituents. Outer core constituents include at least PRRT1, PRRT2, CKAMP44/SHISA9, FRRS1L and NRN1. The proteins of the inner and outer core serve as a platform for other, more peripherally associated AMPAR constituents. Alone or in combination, these auxiliary subunits control the gating and pharmacology of the AMPAR complex and profoundly impact their biogenesis and protein processing (By similarity). Interacts with intersectin 1/ITSN1 (By similarity). Interacts with SNARE complex components, including SNAP25, STX1A, SYT1 and SYT2; this interaction may inhibit SNARE complex formation (PubMed:22832103, PubMed:25915028).</text>
</comment>
<comment type="interaction">
    <interactant intactId="EBI-722696">
        <id>Q7Z6L0</id>
    </interactant>
    <interactant intactId="EBI-13059134">
        <id>Q13520</id>
        <label>AQP6</label>
    </interactant>
    <organismsDiffer>false</organismsDiffer>
    <experiments>3</experiments>
</comment>
<comment type="interaction">
    <interactant intactId="EBI-722696">
        <id>Q7Z6L0</id>
    </interactant>
    <interactant intactId="EBI-13067820">
        <id>Q9NZD1</id>
        <label>GPRC5D</label>
    </interactant>
    <organismsDiffer>false</organismsDiffer>
    <experiments>3</experiments>
</comment>
<comment type="interaction">
    <interactant intactId="EBI-722696">
        <id>Q7Z6L0</id>
    </interactant>
    <interactant intactId="EBI-373355">
        <id>Q5SR56</id>
        <label>MFSD14B</label>
    </interactant>
    <organismsDiffer>false</organismsDiffer>
    <experiments>3</experiments>
</comment>
<comment type="interaction">
    <interactant intactId="EBI-722696">
        <id>Q7Z6L0</id>
    </interactant>
    <interactant intactId="EBI-18159983">
        <id>Q3KNW5</id>
        <label>SLC10A6</label>
    </interactant>
    <organismsDiffer>false</organismsDiffer>
    <experiments>3</experiments>
</comment>
<comment type="interaction">
    <interactant intactId="EBI-722696">
        <id>Q7Z6L0</id>
    </interactant>
    <interactant intactId="EBI-12334905">
        <id>Q71RC9</id>
        <label>SMIM5</label>
    </interactant>
    <organismsDiffer>false</organismsDiffer>
    <experiments>3</experiments>
</comment>
<comment type="interaction">
    <interactant intactId="EBI-722696">
        <id>Q7Z6L0</id>
    </interactant>
    <interactant intactId="EBI-12947623">
        <id>Q96MV1</id>
        <label>TLCD4</label>
    </interactant>
    <organismsDiffer>false</organismsDiffer>
    <experiments>3</experiments>
</comment>
<comment type="subcellular location">
    <subcellularLocation>
        <location evidence="5 13 14">Cell membrane</location>
        <topology evidence="2">Single-pass membrane protein</topology>
    </subcellularLocation>
    <subcellularLocation>
        <location evidence="2">Presynaptic cell membrane</location>
        <topology evidence="2">Single-pass membrane protein</topology>
    </subcellularLocation>
    <subcellularLocation>
        <location evidence="2">Synapse</location>
    </subcellularLocation>
    <subcellularLocation>
        <location evidence="12">Cell projection</location>
        <location evidence="12">Axon</location>
    </subcellularLocation>
    <subcellularLocation>
        <location evidence="1">Cytoplasmic vesicle</location>
        <location evidence="1">Secretory vesicle</location>
        <location evidence="1">Synaptic vesicle membrane</location>
    </subcellularLocation>
    <subcellularLocation>
        <location evidence="1">Postsynaptic density membrane</location>
    </subcellularLocation>
    <subcellularLocation>
        <location evidence="1">Cell projection</location>
        <location evidence="1">Dendritic spine</location>
    </subcellularLocation>
</comment>
<comment type="alternative products">
    <event type="alternative splicing"/>
    <isoform>
        <id>Q7Z6L0-1</id>
        <name>1</name>
        <sequence type="displayed"/>
    </isoform>
    <isoform>
        <id>Q7Z6L0-2</id>
        <name>2</name>
        <sequence type="described" ref="VSP_028815"/>
    </isoform>
    <isoform>
        <id>Q7Z6L0-3</id>
        <name>3</name>
        <sequence type="described" ref="VSP_028814"/>
    </isoform>
</comment>
<comment type="disease" evidence="5 6 7 8 13 14">
    <disease id="DI-03309">
        <name>Episodic kinesigenic dyskinesia 1</name>
        <acronym>EKD1</acronym>
        <description>An autosomal dominant form of paroxysmal kinesigenic dyskinesia, a neurologic condition characterized by recurrent and brief attacks of abnormal involuntary movements, triggered by sudden voluntary movement. These attacks usually have onset during childhood or early adulthood and can involve dystonic postures, chorea, or athetosis.</description>
        <dbReference type="MIM" id="128200"/>
    </disease>
    <text evidence="5">The disease is caused by variants affecting the gene represented in this entry. Disease-causing mutations that produce truncation of the C-terminus of the protein alter subcellular location, from plasma membrane to cytoplasm (PubMed:22101681).</text>
</comment>
<comment type="disease" evidence="9 12">
    <disease id="DI-03372">
        <name>Convulsions, familial infantile, with paroxysmal choreoathetosis</name>
        <acronym>ICCA</acronym>
        <description>A syndrome characterized by clinical features of benign familial infantile seizures and episodic kinesigenic dyskinesia. Benign familial infantile seizures is a disorder characterized by afebrile seizures occurring during the first year of life, without neurologic sequelae. Paroxysmal choreoathetosis is a disorder of involuntary movements characterized by attacks that occur spontaneously or are induced by a variety of stimuli.</description>
        <dbReference type="MIM" id="602066"/>
    </disease>
    <text>The disease is caused by variants affecting the gene represented in this entry.</text>
</comment>
<comment type="disease" evidence="9 10 11">
    <disease id="DI-03373">
        <name>Seizures, benign familial infantile, 2</name>
        <acronym>BFIS2</acronym>
        <description>A form of benign familial infantile epilepsy, a neurologic disorder characterized by afebrile seizures occurring in clusters during the first year of life, without neurologic sequelae. BFIS2 inheritance is autosomal dominant.</description>
        <dbReference type="MIM" id="605751"/>
    </disease>
    <text>The disease is caused by variants affecting the gene represented in this entry.</text>
</comment>
<comment type="similarity">
    <text evidence="17">Belongs to the CD225/Dispanin family.</text>
</comment>
<comment type="online information" name="Proline-rich transmembrane protein 2 (PRRT2)">
    <link uri="https://databases.lovd.nl/shared/genes/PRRT2"/>
    <text>Leiden Open Variation Database (LOVD)</text>
</comment>
<feature type="chain" id="PRO_0000307745" description="Proline-rich transmembrane protein 2">
    <location>
        <begin position="1"/>
        <end position="340"/>
    </location>
</feature>
<feature type="topological domain" description="Cytoplasmic" evidence="2 3">
    <location>
        <begin position="1"/>
        <end position="268"/>
    </location>
</feature>
<feature type="intramembrane region" description="Helical" evidence="2 3">
    <location>
        <begin position="269"/>
        <end position="289"/>
    </location>
</feature>
<feature type="topological domain" description="Cytoplasmic" evidence="2 3">
    <location>
        <begin position="290"/>
        <end position="317"/>
    </location>
</feature>
<feature type="transmembrane region" description="Helical" evidence="2 3">
    <location>
        <begin position="318"/>
        <end position="338"/>
    </location>
</feature>
<feature type="topological domain" description="Extracellular" evidence="2 3">
    <location>
        <begin position="339"/>
        <end position="340"/>
    </location>
</feature>
<feature type="region of interest" description="Disordered" evidence="4">
    <location>
        <begin position="1"/>
        <end position="261"/>
    </location>
</feature>
<feature type="compositionally biased region" description="Basic and acidic residues" evidence="4">
    <location>
        <begin position="9"/>
        <end position="18"/>
    </location>
</feature>
<feature type="compositionally biased region" description="Pro residues" evidence="4">
    <location>
        <begin position="131"/>
        <end position="155"/>
    </location>
</feature>
<feature type="compositionally biased region" description="Pro residues" evidence="4">
    <location>
        <begin position="197"/>
        <end position="207"/>
    </location>
</feature>
<feature type="modified residue" description="Phosphoserine" evidence="2">
    <location>
        <position position="28"/>
    </location>
</feature>
<feature type="modified residue" description="Phosphothreonine" evidence="2">
    <location>
        <position position="74"/>
    </location>
</feature>
<feature type="modified residue" description="Phosphoserine" evidence="1">
    <location>
        <position position="238"/>
    </location>
</feature>
<feature type="modified residue" description="Omega-N-methylarginine" evidence="2">
    <location>
        <position position="240"/>
    </location>
</feature>
<feature type="modified residue" description="Phosphoserine" evidence="2">
    <location>
        <position position="248"/>
    </location>
</feature>
<feature type="modified residue" description="Phosphoserine" evidence="2">
    <location>
        <position position="249"/>
    </location>
</feature>
<feature type="splice variant" id="VSP_028814" description="In isoform 3." evidence="15">
    <original>SRNSLQQGDVDGAQRLGRVAKLLSIVALVGGVLIIIASCVINLGVYK</original>
    <variation>VSPMGP</variation>
    <location>
        <begin position="294"/>
        <end position="340"/>
    </location>
</feature>
<feature type="splice variant" id="VSP_028815" description="In isoform 2." evidence="15 16">
    <original>G</original>
    <variation>GGEWGLGTGRGGMEGLARAALLTPAPALSCLSSLPLLCLSLSPPPPVCPSLSSPT</variation>
    <location>
        <position position="337"/>
    </location>
</feature>
<feature type="sequence variant" id="VAR_067010" description="In dbSNP:rs79182085." evidence="5">
    <original>P</original>
    <variation>A</variation>
    <location>
        <position position="138"/>
    </location>
</feature>
<feature type="sequence variant" id="VAR_067011" description="In dbSNP:rs79568162." evidence="5">
    <original>D</original>
    <variation>H</variation>
    <location>
        <position position="147"/>
    </location>
</feature>
<feature type="sequence variant" id="VAR_067012" description="In dbSNP:rs745594874." evidence="5">
    <original>A</original>
    <variation>P</variation>
    <location>
        <position position="214"/>
    </location>
</feature>
<feature type="sequence variant" id="VAR_067320" description="In dbSNP:rs200926711." evidence="9">
    <original>P</original>
    <variation>R</variation>
    <location>
        <position position="215"/>
    </location>
</feature>
<feature type="sequence variant" id="VAR_067321" description="In dbSNP:rs76335820." evidence="9">
    <original>P</original>
    <variation>L</variation>
    <location>
        <position position="216"/>
    </location>
</feature>
<feature type="sequence variant" id="VAR_067013" description="In dbSNP:rs199556853." evidence="5">
    <original>G</original>
    <variation>R</variation>
    <location>
        <position position="237"/>
    </location>
</feature>
<feature type="sequence variant" id="VAR_080269" description="In ICCA; may be produced at very low levels due to a premature stop codon in the mRNA, that could lead to nonsense-mediated mRNA decay; dbSNP:rs387907126." evidence="12">
    <location>
        <begin position="240"/>
        <end position="340"/>
    </location>
</feature>
<feature type="sequence variant" id="VAR_067014" description="In dbSNP:rs754897123." evidence="5">
    <original>R</original>
    <variation>H</variation>
    <location>
        <position position="245"/>
    </location>
</feature>
<feature type="sequence variant" id="VAR_067322" description="In EKD1; dbSNP:rs387907128." evidence="6">
    <original>R</original>
    <variation>W</variation>
    <location>
        <position position="266"/>
    </location>
</feature>
<feature type="sequence variant" id="VAR_067323" description="In EKD1." evidence="7">
    <original>W</original>
    <variation>R</variation>
    <location>
        <position position="281"/>
    </location>
</feature>
<feature type="sequence variant" id="VAR_067324" description="In EKD1; may affect subcellular location, becoming predominantly cytoplasmic; impairs interaction with GRIA1 and SNAP25." evidence="7 13">
    <original>A</original>
    <variation>T</variation>
    <location>
        <position position="287"/>
    </location>
</feature>
<feature type="sequence variant" id="VAR_067325" description="In EKD1; dbSNP:rs767799831." evidence="8">
    <original>G</original>
    <variation>R</variation>
    <location>
        <position position="305"/>
    </location>
</feature>
<feature type="sequence variant" id="VAR_067326" description="In EKD1; no effect on location at the plasma membrane; dbSNP:rs932713001." evidence="7 14">
    <original>R</original>
    <variation>C</variation>
    <location>
        <position position="308"/>
    </location>
</feature>
<feature type="sequence variant" id="VAR_067327" description="In ICCA; dbSNP:rs387907125." evidence="9">
    <original>S</original>
    <variation>N</variation>
    <location>
        <position position="317"/>
    </location>
</feature>
<feature type="sequence variant" id="VAR_068426" description="In BFIS2." evidence="11">
    <original>G</original>
    <variation>E</variation>
    <location>
        <position position="323"/>
    </location>
</feature>
<feature type="sequence conflict" description="In Ref. 5; AAH11405." evidence="17" ref="5">
    <original>T</original>
    <variation>S</variation>
    <location>
        <position position="151"/>
    </location>
</feature>
<feature type="sequence conflict" description="In Ref. 3; CAD38881." evidence="17" ref="3">
    <original>A</original>
    <variation>AP</variation>
    <location>
        <position position="214"/>
    </location>
</feature>
<feature type="sequence conflict" description="In Ref. 3; CAD38881." evidence="17" ref="3">
    <original>S</original>
    <variation>P</variation>
    <location>
        <position position="275"/>
    </location>
</feature>
<reference key="1">
    <citation type="journal article" date="2004" name="Nat. Genet.">
        <title>Complete sequencing and characterization of 21,243 full-length human cDNAs.</title>
        <authorList>
            <person name="Ota T."/>
            <person name="Suzuki Y."/>
            <person name="Nishikawa T."/>
            <person name="Otsuki T."/>
            <person name="Sugiyama T."/>
            <person name="Irie R."/>
            <person name="Wakamatsu A."/>
            <person name="Hayashi K."/>
            <person name="Sato H."/>
            <person name="Nagai K."/>
            <person name="Kimura K."/>
            <person name="Makita H."/>
            <person name="Sekine M."/>
            <person name="Obayashi M."/>
            <person name="Nishi T."/>
            <person name="Shibahara T."/>
            <person name="Tanaka T."/>
            <person name="Ishii S."/>
            <person name="Yamamoto J."/>
            <person name="Saito K."/>
            <person name="Kawai Y."/>
            <person name="Isono Y."/>
            <person name="Nakamura Y."/>
            <person name="Nagahari K."/>
            <person name="Murakami K."/>
            <person name="Yasuda T."/>
            <person name="Iwayanagi T."/>
            <person name="Wagatsuma M."/>
            <person name="Shiratori A."/>
            <person name="Sudo H."/>
            <person name="Hosoiri T."/>
            <person name="Kaku Y."/>
            <person name="Kodaira H."/>
            <person name="Kondo H."/>
            <person name="Sugawara M."/>
            <person name="Takahashi M."/>
            <person name="Kanda K."/>
            <person name="Yokoi T."/>
            <person name="Furuya T."/>
            <person name="Kikkawa E."/>
            <person name="Omura Y."/>
            <person name="Abe K."/>
            <person name="Kamihara K."/>
            <person name="Katsuta N."/>
            <person name="Sato K."/>
            <person name="Tanikawa M."/>
            <person name="Yamazaki M."/>
            <person name="Ninomiya K."/>
            <person name="Ishibashi T."/>
            <person name="Yamashita H."/>
            <person name="Murakawa K."/>
            <person name="Fujimori K."/>
            <person name="Tanai H."/>
            <person name="Kimata M."/>
            <person name="Watanabe M."/>
            <person name="Hiraoka S."/>
            <person name="Chiba Y."/>
            <person name="Ishida S."/>
            <person name="Ono Y."/>
            <person name="Takiguchi S."/>
            <person name="Watanabe S."/>
            <person name="Yosida M."/>
            <person name="Hotuta T."/>
            <person name="Kusano J."/>
            <person name="Kanehori K."/>
            <person name="Takahashi-Fujii A."/>
            <person name="Hara H."/>
            <person name="Tanase T.-O."/>
            <person name="Nomura Y."/>
            <person name="Togiya S."/>
            <person name="Komai F."/>
            <person name="Hara R."/>
            <person name="Takeuchi K."/>
            <person name="Arita M."/>
            <person name="Imose N."/>
            <person name="Musashino K."/>
            <person name="Yuuki H."/>
            <person name="Oshima A."/>
            <person name="Sasaki N."/>
            <person name="Aotsuka S."/>
            <person name="Yoshikawa Y."/>
            <person name="Matsunawa H."/>
            <person name="Ichihara T."/>
            <person name="Shiohata N."/>
            <person name="Sano S."/>
            <person name="Moriya S."/>
            <person name="Momiyama H."/>
            <person name="Satoh N."/>
            <person name="Takami S."/>
            <person name="Terashima Y."/>
            <person name="Suzuki O."/>
            <person name="Nakagawa S."/>
            <person name="Senoh A."/>
            <person name="Mizoguchi H."/>
            <person name="Goto Y."/>
            <person name="Shimizu F."/>
            <person name="Wakebe H."/>
            <person name="Hishigaki H."/>
            <person name="Watanabe T."/>
            <person name="Sugiyama A."/>
            <person name="Takemoto M."/>
            <person name="Kawakami B."/>
            <person name="Yamazaki M."/>
            <person name="Watanabe K."/>
            <person name="Kumagai A."/>
            <person name="Itakura S."/>
            <person name="Fukuzumi Y."/>
            <person name="Fujimori Y."/>
            <person name="Komiyama M."/>
            <person name="Tashiro H."/>
            <person name="Tanigami A."/>
            <person name="Fujiwara T."/>
            <person name="Ono T."/>
            <person name="Yamada K."/>
            <person name="Fujii Y."/>
            <person name="Ozaki K."/>
            <person name="Hirao M."/>
            <person name="Ohmori Y."/>
            <person name="Kawabata A."/>
            <person name="Hikiji T."/>
            <person name="Kobatake N."/>
            <person name="Inagaki H."/>
            <person name="Ikema Y."/>
            <person name="Okamoto S."/>
            <person name="Okitani R."/>
            <person name="Kawakami T."/>
            <person name="Noguchi S."/>
            <person name="Itoh T."/>
            <person name="Shigeta K."/>
            <person name="Senba T."/>
            <person name="Matsumura K."/>
            <person name="Nakajima Y."/>
            <person name="Mizuno T."/>
            <person name="Morinaga M."/>
            <person name="Sasaki M."/>
            <person name="Togashi T."/>
            <person name="Oyama M."/>
            <person name="Hata H."/>
            <person name="Watanabe M."/>
            <person name="Komatsu T."/>
            <person name="Mizushima-Sugano J."/>
            <person name="Satoh T."/>
            <person name="Shirai Y."/>
            <person name="Takahashi Y."/>
            <person name="Nakagawa K."/>
            <person name="Okumura K."/>
            <person name="Nagase T."/>
            <person name="Nomura N."/>
            <person name="Kikuchi H."/>
            <person name="Masuho Y."/>
            <person name="Yamashita R."/>
            <person name="Nakai K."/>
            <person name="Yada T."/>
            <person name="Nakamura Y."/>
            <person name="Ohara O."/>
            <person name="Isogai T."/>
            <person name="Sugano S."/>
        </authorList>
    </citation>
    <scope>NUCLEOTIDE SEQUENCE [LARGE SCALE MRNA] (ISOFORMS 2 AND 3)</scope>
    <source>
        <tissue>Teratocarcinoma</tissue>
        <tissue>Testis</tissue>
    </source>
</reference>
<reference key="2">
    <citation type="journal article" date="2005" name="DNA Res.">
        <title>Signal sequence and keyword trap in silico for selection of full-length human cDNAs encoding secretion or membrane proteins from oligo-capped cDNA libraries.</title>
        <authorList>
            <person name="Otsuki T."/>
            <person name="Ota T."/>
            <person name="Nishikawa T."/>
            <person name="Hayashi K."/>
            <person name="Suzuki Y."/>
            <person name="Yamamoto J."/>
            <person name="Wakamatsu A."/>
            <person name="Kimura K."/>
            <person name="Sakamoto K."/>
            <person name="Hatano N."/>
            <person name="Kawai Y."/>
            <person name="Ishii S."/>
            <person name="Saito K."/>
            <person name="Kojima S."/>
            <person name="Sugiyama T."/>
            <person name="Ono T."/>
            <person name="Okano K."/>
            <person name="Yoshikawa Y."/>
            <person name="Aotsuka S."/>
            <person name="Sasaki N."/>
            <person name="Hattori A."/>
            <person name="Okumura K."/>
            <person name="Nagai K."/>
            <person name="Sugano S."/>
            <person name="Isogai T."/>
        </authorList>
    </citation>
    <scope>NUCLEOTIDE SEQUENCE [LARGE SCALE MRNA] (ISOFORM 2)</scope>
    <source>
        <tissue>Embryo</tissue>
    </source>
</reference>
<reference key="3">
    <citation type="journal article" date="2007" name="BMC Genomics">
        <title>The full-ORF clone resource of the German cDNA consortium.</title>
        <authorList>
            <person name="Bechtel S."/>
            <person name="Rosenfelder H."/>
            <person name="Duda A."/>
            <person name="Schmidt C.P."/>
            <person name="Ernst U."/>
            <person name="Wellenreuther R."/>
            <person name="Mehrle A."/>
            <person name="Schuster C."/>
            <person name="Bahr A."/>
            <person name="Bloecker H."/>
            <person name="Heubner D."/>
            <person name="Hoerlein A."/>
            <person name="Michel G."/>
            <person name="Wedler H."/>
            <person name="Koehrer K."/>
            <person name="Ottenwaelder B."/>
            <person name="Poustka A."/>
            <person name="Wiemann S."/>
            <person name="Schupp I."/>
        </authorList>
    </citation>
    <scope>NUCLEOTIDE SEQUENCE [LARGE SCALE MRNA] (ISOFORM 1)</scope>
    <source>
        <tissue>Brain</tissue>
    </source>
</reference>
<reference key="4">
    <citation type="submission" date="2005-07" db="EMBL/GenBank/DDBJ databases">
        <authorList>
            <person name="Mural R.J."/>
            <person name="Istrail S."/>
            <person name="Sutton G.G."/>
            <person name="Florea L."/>
            <person name="Halpern A.L."/>
            <person name="Mobarry C.M."/>
            <person name="Lippert R."/>
            <person name="Walenz B."/>
            <person name="Shatkay H."/>
            <person name="Dew I."/>
            <person name="Miller J.R."/>
            <person name="Flanigan M.J."/>
            <person name="Edwards N.J."/>
            <person name="Bolanos R."/>
            <person name="Fasulo D."/>
            <person name="Halldorsson B.V."/>
            <person name="Hannenhalli S."/>
            <person name="Turner R."/>
            <person name="Yooseph S."/>
            <person name="Lu F."/>
            <person name="Nusskern D.R."/>
            <person name="Shue B.C."/>
            <person name="Zheng X.H."/>
            <person name="Zhong F."/>
            <person name="Delcher A.L."/>
            <person name="Huson D.H."/>
            <person name="Kravitz S.A."/>
            <person name="Mouchard L."/>
            <person name="Reinert K."/>
            <person name="Remington K.A."/>
            <person name="Clark A.G."/>
            <person name="Waterman M.S."/>
            <person name="Eichler E.E."/>
            <person name="Adams M.D."/>
            <person name="Hunkapiller M.W."/>
            <person name="Myers E.W."/>
            <person name="Venter J.C."/>
        </authorList>
    </citation>
    <scope>NUCLEOTIDE SEQUENCE [LARGE SCALE GENOMIC DNA]</scope>
</reference>
<reference key="5">
    <citation type="journal article" date="2004" name="Genome Res.">
        <title>The status, quality, and expansion of the NIH full-length cDNA project: the Mammalian Gene Collection (MGC).</title>
        <authorList>
            <consortium name="The MGC Project Team"/>
        </authorList>
    </citation>
    <scope>NUCLEOTIDE SEQUENCE [LARGE SCALE MRNA] (ISOFORM 1)</scope>
    <source>
        <tissue>Brain</tissue>
        <tissue>Eye</tissue>
    </source>
</reference>
<reference key="6">
    <citation type="journal article" date="2015" name="Int. J. Mol. Sci.">
        <title>PRRT2 Mutant Leads to Dysfunction of Glutamate Signaling.</title>
        <authorList>
            <person name="Li M."/>
            <person name="Niu F."/>
            <person name="Zhu X."/>
            <person name="Wu X."/>
            <person name="Shen N."/>
            <person name="Peng X."/>
            <person name="Liu Y."/>
        </authorList>
    </citation>
    <scope>INTERACTION WITH GRIA1 AND SNAP25</scope>
    <scope>SUBCELLULAR LOCATION</scope>
    <scope>CHARACTERIZATION OF VARIANT EKD1 THR-287</scope>
</reference>
<reference key="7">
    <citation type="journal article" date="2011" name="Nat. Genet.">
        <title>Exome sequencing identifies truncating mutations in PRRT2 that cause paroxysmal kinesigenic dyskinesia.</title>
        <authorList>
            <person name="Chen W.J."/>
            <person name="Lin Y."/>
            <person name="Xiong Z.Q."/>
            <person name="Wei W."/>
            <person name="Ni W."/>
            <person name="Tan G.H."/>
            <person name="Guo S.L."/>
            <person name="He J."/>
            <person name="Chen Y.F."/>
            <person name="Zhang Q.J."/>
            <person name="Li H.F."/>
            <person name="Lin Y."/>
            <person name="Murong S.X."/>
            <person name="Xu J."/>
            <person name="Wang N."/>
            <person name="Wu Z.Y."/>
        </authorList>
    </citation>
    <scope>INVOLVEMENT IN EKD1</scope>
    <scope>SUBCELLULAR LOCATION</scope>
    <scope>VARIANTS ALA-138; HIS-147; PRO-214; ARG-237 AND HIS-245</scope>
</reference>
<reference key="8">
    <citation type="journal article" date="2012" name="Am. J. Hum. Genet.">
        <title>PRRT2 mutations cause benign familial infantile epilepsy and infantile convulsions with choreoathetosis syndrome.</title>
        <authorList>
            <person name="Heron S.E."/>
            <person name="Grinton B.E."/>
            <person name="Kivity S."/>
            <person name="Afawi Z."/>
            <person name="Zuberi S.M."/>
            <person name="Hughes J.N."/>
            <person name="Pridmore C."/>
            <person name="Hodgson B.L."/>
            <person name="Iona X."/>
            <person name="Sadleir L.G."/>
            <person name="Pelekanos J."/>
            <person name="Herlenius E."/>
            <person name="Goldberg-Stern H."/>
            <person name="Bassan H."/>
            <person name="Haan E."/>
            <person name="Korczyn A.D."/>
            <person name="Gardner A.E."/>
            <person name="Corbett M.A."/>
            <person name="Gecz J."/>
            <person name="Thomas P.Q."/>
            <person name="Mulley J.C."/>
            <person name="Berkovic S.F."/>
            <person name="Scheffer I.E."/>
            <person name="Dibbens L.M."/>
        </authorList>
    </citation>
    <scope>INVOLVEMENT IN BFIS2 AND ICCA</scope>
    <scope>VARIANT ICCA ASN-317</scope>
    <scope>VARIANTS ARG-215 AND LEU-216</scope>
</reference>
<reference key="9">
    <citation type="journal article" date="2012" name="Cell Rep.">
        <title>Mutations in the gene PRRT2 cause paroxysmal kinesigenic dyskinesia with infantile convulsions.</title>
        <authorList>
            <person name="Lee H.Y."/>
            <person name="Huang Y."/>
            <person name="Bruneau N."/>
            <person name="Roll P."/>
            <person name="Roberson E.D."/>
            <person name="Hermann M."/>
            <person name="Quinn E."/>
            <person name="Maas J."/>
            <person name="Edwards R."/>
            <person name="Ashizawa T."/>
            <person name="Baykan B."/>
            <person name="Bhatia K."/>
            <person name="Bressman S."/>
            <person name="Bruno M.K."/>
            <person name="Brunt E.R."/>
            <person name="Caraballo R."/>
            <person name="Echenne B."/>
            <person name="Fejerman N."/>
            <person name="Frucht S."/>
            <person name="Gurnett C.A."/>
            <person name="Hirsch E."/>
            <person name="Houlden H."/>
            <person name="Jankovic J."/>
            <person name="Lee W.L."/>
            <person name="Lynch D.R."/>
            <person name="Mohammed S."/>
            <person name="Mueller U."/>
            <person name="Nespeca M.P."/>
            <person name="Renner D."/>
            <person name="Rochette J."/>
            <person name="Rudolf G."/>
            <person name="Saiki S."/>
            <person name="Soong B.W."/>
            <person name="Swoboda K.J."/>
            <person name="Tucker S."/>
            <person name="Wood N."/>
            <person name="Hanna M."/>
            <person name="Bowcock A.M."/>
            <person name="Szepetowski P."/>
            <person name="Fu Y.H."/>
            <person name="Ptacek L.J."/>
        </authorList>
    </citation>
    <scope>INVOLVEMENT IN ICCA</scope>
    <scope>VARIANT ICCA 240-ARG--LYS-340 DEL</scope>
    <scope>INTERACTION WITH SNAP25</scope>
    <scope>SUBCELLULAR LOCATION</scope>
</reference>
<reference key="10">
    <citation type="journal article" date="2012" name="J. Hum. Genet.">
        <title>Mutations in PRRT2 responsible for paroxysmal kinesigenic dyskinesias also cause benign familial infantile convulsions.</title>
        <authorList>
            <person name="Ono S."/>
            <person name="Yoshiura K.I."/>
            <person name="Kinoshita A."/>
            <person name="Kikuchi T."/>
            <person name="Nakane Y."/>
            <person name="Kato N."/>
            <person name="Sadamatsu M."/>
            <person name="Konishi T."/>
            <person name="Nagamitsu S."/>
            <person name="Matsuura M."/>
            <person name="Yasuda A."/>
            <person name="Komine M."/>
            <person name="Kanai K."/>
            <person name="Inoue T."/>
            <person name="Osamura T."/>
            <person name="Saito K."/>
            <person name="Hirose S."/>
            <person name="Koide H."/>
            <person name="Tomita H."/>
            <person name="Ozawa H."/>
            <person name="Niikawa N."/>
            <person name="Kurotaki N."/>
        </authorList>
    </citation>
    <scope>INVOLVEMENT IN BFIS2</scope>
</reference>
<reference key="11">
    <citation type="journal article" date="2012" name="J. Med. Genet.">
        <title>Mutations in PRRT2 result in paroxysmal dyskinesias with marked variability in clinical expression.</title>
        <authorList>
            <person name="Liu Q."/>
            <person name="Qi Z."/>
            <person name="Wan X.H."/>
            <person name="Li J.Y."/>
            <person name="Shi L."/>
            <person name="Lu Q."/>
            <person name="Zhou X.Q."/>
            <person name="Qiao L."/>
            <person name="Wu L.W."/>
            <person name="Liu X.Q."/>
            <person name="Yang W."/>
            <person name="Liu Y."/>
            <person name="Cui L.Y."/>
            <person name="Zhang X."/>
        </authorList>
    </citation>
    <scope>VARIANT EKD1 ARG-305</scope>
</reference>
<reference key="12">
    <citation type="journal article" date="2012" name="PLoS ONE">
        <title>The dispanins: a novel gene family of ancient origin that contains 14 human members.</title>
        <authorList>
            <person name="Sallman Almen M."/>
            <person name="Bringeland N."/>
            <person name="Fredriksson R."/>
            <person name="Schioth H.B."/>
        </authorList>
    </citation>
    <scope>GENE FAMILY</scope>
</reference>
<reference key="13">
    <citation type="journal article" date="2016" name="Oncotarget">
        <title>PRRT2 mutations lead to neuronal dysfunction and neurodevelopmental defects.</title>
        <authorList>
            <person name="Liu Y.T."/>
            <person name="Nian F.S."/>
            <person name="Chou W.J."/>
            <person name="Tai C.Y."/>
            <person name="Kwan S.Y."/>
            <person name="Chen C."/>
            <person name="Kuo P.W."/>
            <person name="Lin P.H."/>
            <person name="Chen C.Y."/>
            <person name="Huang C.W."/>
            <person name="Lee Y.C."/>
            <person name="Soong B.W."/>
            <person name="Tsai J.W."/>
        </authorList>
    </citation>
    <scope>SUBCELLULAR LOCATION</scope>
    <scope>CHARACTERIZATION OF VARIANT EKD1 CYS-308</scope>
</reference>
<reference key="14">
    <citation type="journal article" date="2011" name="Brain">
        <title>Identification of PRRT2 as the causative gene of paroxysmal kinesigenic dyskinesias.</title>
        <authorList>
            <person name="Wang J.L."/>
            <person name="Cao L."/>
            <person name="Li X.H."/>
            <person name="Hu Z.M."/>
            <person name="Li J.D."/>
            <person name="Zhang J.G."/>
            <person name="Liang Y."/>
            <person name="San A."/>
            <person name="Li N."/>
            <person name="Chen S.Q."/>
            <person name="Guo J.F."/>
            <person name="Jiang H."/>
            <person name="Shen L."/>
            <person name="Zheng L."/>
            <person name="Mao X."/>
            <person name="Yan W.Q."/>
            <person name="Zhou Y."/>
            <person name="Shi Y.T."/>
            <person name="Ai S.X."/>
            <person name="Dai M.Z."/>
            <person name="Zhang P."/>
            <person name="Xia K."/>
            <person name="Chen S.D."/>
            <person name="Tang B.S."/>
        </authorList>
    </citation>
    <scope>VARIANT EKD1 TRP-266</scope>
</reference>
<reference key="15">
    <citation type="journal article" date="2012" name="Hum. Mutat.">
        <title>PRRT2 Mutations are the major cause of benign familial infantile seizures.</title>
        <authorList>
            <person name="Schubert J."/>
            <person name="Paravidino R."/>
            <person name="Becker F."/>
            <person name="Berger A."/>
            <person name="Bebek N."/>
            <person name="Bianchi A."/>
            <person name="Brockmann K."/>
            <person name="Capovilla G."/>
            <person name="Bernardina B.D."/>
            <person name="Fukuyama Y."/>
            <person name="Hoffmann G.F."/>
            <person name="Jurkat-Rott K."/>
            <person name="Antonnen A.K."/>
            <person name="Kurlemann G."/>
            <person name="Lehesjoki A.E."/>
            <person name="Lehmann-Horn F."/>
            <person name="Mastrangelo M."/>
            <person name="Mause U."/>
            <person name="Muller S."/>
            <person name="Neubauer B."/>
            <person name="Pust B."/>
            <person name="Rating D."/>
            <person name="Robbiano A."/>
            <person name="Ruf S."/>
            <person name="Schroeder C."/>
            <person name="Seidel A."/>
            <person name="Specchio N."/>
            <person name="Stephani U."/>
            <person name="Striano P."/>
            <person name="Teichler J."/>
            <person name="Turkdogan D."/>
            <person name="Vigevano F."/>
            <person name="Viri M."/>
            <person name="Bauer P."/>
            <person name="Zara F."/>
            <person name="Lerche H."/>
            <person name="Weber Y.G."/>
        </authorList>
    </citation>
    <scope>VARIANT BFIS2 GLU-323</scope>
</reference>
<reference key="16">
    <citation type="journal article" date="2012" name="J. Med. Genet.">
        <title>Targeted genomic sequencing identifies PRRT2 mutations as a cause of paroxysmal kinesigenic choreoathetosis.</title>
        <authorList>
            <person name="Li J."/>
            <person name="Zhu X."/>
            <person name="Wang X."/>
            <person name="Sun W."/>
            <person name="Feng B."/>
            <person name="Du T."/>
            <person name="Sun B."/>
            <person name="Niu F."/>
            <person name="Wei H."/>
            <person name="Wu X."/>
            <person name="Dong L."/>
            <person name="Li L."/>
            <person name="Cai X."/>
            <person name="Wang Y."/>
            <person name="Liu Y."/>
        </authorList>
    </citation>
    <scope>VARIANTS EKD1 ARG-281; THR-287 AND CYS-308</scope>
</reference>